<reference key="1">
    <citation type="journal article" date="2003" name="Proc. Natl. Acad. Sci. U.S.A.">
        <title>Reductive genome evolution in Buchnera aphidicola.</title>
        <authorList>
            <person name="van Ham R.C.H.J."/>
            <person name="Kamerbeek J."/>
            <person name="Palacios C."/>
            <person name="Rausell C."/>
            <person name="Abascal F."/>
            <person name="Bastolla U."/>
            <person name="Fernandez J.M."/>
            <person name="Jimenez L."/>
            <person name="Postigo M."/>
            <person name="Silva F.J."/>
            <person name="Tamames J."/>
            <person name="Viguera E."/>
            <person name="Latorre A."/>
            <person name="Valencia A."/>
            <person name="Moran F."/>
            <person name="Moya A."/>
        </authorList>
    </citation>
    <scope>NUCLEOTIDE SEQUENCE [LARGE SCALE GENOMIC DNA]</scope>
    <source>
        <strain>Bp</strain>
    </source>
</reference>
<sequence length="168" mass="18423">MMLDFKKKKELVTQINLIAKTALSIVVANPQGIKSNDITQLRKLARKSNVKLGVYRNTLLNLGIKNTPFECLKNILIGPTLIAYSSEHPGSAAKLLKNFSMSQSSNPNFKILGAVFEGKAISGSNINSLADIPTFNEALRRFIIIAKEISAGKLLRILVSIKNIKENS</sequence>
<gene>
    <name type="primary">rplJ</name>
    <name type="ordered locus">bbp_037</name>
</gene>
<keyword id="KW-1185">Reference proteome</keyword>
<keyword id="KW-0687">Ribonucleoprotein</keyword>
<keyword id="KW-0689">Ribosomal protein</keyword>
<keyword id="KW-0694">RNA-binding</keyword>
<keyword id="KW-0699">rRNA-binding</keyword>
<feature type="chain" id="PRO_0000154604" description="Large ribosomal subunit protein uL10">
    <location>
        <begin position="1"/>
        <end position="168"/>
    </location>
</feature>
<dbReference type="EMBL" id="AE016826">
    <property type="protein sequence ID" value="AAO26780.1"/>
    <property type="molecule type" value="Genomic_DNA"/>
</dbReference>
<dbReference type="RefSeq" id="WP_011091181.1">
    <property type="nucleotide sequence ID" value="NC_004545.1"/>
</dbReference>
<dbReference type="STRING" id="224915.bbp_037"/>
<dbReference type="KEGG" id="bab:bbp_037"/>
<dbReference type="eggNOG" id="COG0244">
    <property type="taxonomic scope" value="Bacteria"/>
</dbReference>
<dbReference type="HOGENOM" id="CLU_092227_0_2_6"/>
<dbReference type="OrthoDB" id="9808307at2"/>
<dbReference type="Proteomes" id="UP000000601">
    <property type="component" value="Chromosome"/>
</dbReference>
<dbReference type="GO" id="GO:1990904">
    <property type="term" value="C:ribonucleoprotein complex"/>
    <property type="evidence" value="ECO:0007669"/>
    <property type="project" value="UniProtKB-KW"/>
</dbReference>
<dbReference type="GO" id="GO:0005840">
    <property type="term" value="C:ribosome"/>
    <property type="evidence" value="ECO:0007669"/>
    <property type="project" value="UniProtKB-KW"/>
</dbReference>
<dbReference type="GO" id="GO:0070180">
    <property type="term" value="F:large ribosomal subunit rRNA binding"/>
    <property type="evidence" value="ECO:0007669"/>
    <property type="project" value="UniProtKB-UniRule"/>
</dbReference>
<dbReference type="GO" id="GO:0006412">
    <property type="term" value="P:translation"/>
    <property type="evidence" value="ECO:0007669"/>
    <property type="project" value="UniProtKB-UniRule"/>
</dbReference>
<dbReference type="CDD" id="cd05797">
    <property type="entry name" value="Ribosomal_L10"/>
    <property type="match status" value="1"/>
</dbReference>
<dbReference type="Gene3D" id="3.30.70.1730">
    <property type="match status" value="1"/>
</dbReference>
<dbReference type="HAMAP" id="MF_00362">
    <property type="entry name" value="Ribosomal_uL10"/>
    <property type="match status" value="1"/>
</dbReference>
<dbReference type="InterPro" id="IPR001790">
    <property type="entry name" value="Ribosomal_uL10"/>
</dbReference>
<dbReference type="InterPro" id="IPR043141">
    <property type="entry name" value="Ribosomal_uL10-like_sf"/>
</dbReference>
<dbReference type="InterPro" id="IPR022973">
    <property type="entry name" value="Ribosomal_uL10_bac"/>
</dbReference>
<dbReference type="InterPro" id="IPR047865">
    <property type="entry name" value="Ribosomal_uL10_bac_type"/>
</dbReference>
<dbReference type="NCBIfam" id="NF000955">
    <property type="entry name" value="PRK00099.1-1"/>
    <property type="match status" value="1"/>
</dbReference>
<dbReference type="PANTHER" id="PTHR11560">
    <property type="entry name" value="39S RIBOSOMAL PROTEIN L10, MITOCHONDRIAL"/>
    <property type="match status" value="1"/>
</dbReference>
<dbReference type="Pfam" id="PF00466">
    <property type="entry name" value="Ribosomal_L10"/>
    <property type="match status" value="1"/>
</dbReference>
<dbReference type="SUPFAM" id="SSF160369">
    <property type="entry name" value="Ribosomal protein L10-like"/>
    <property type="match status" value="1"/>
</dbReference>
<proteinExistence type="inferred from homology"/>
<accession>Q89B18</accession>
<name>RL10_BUCBP</name>
<comment type="function">
    <text evidence="1">Forms part of the ribosomal stalk, playing a central role in the interaction of the ribosome with GTP-bound translation factors.</text>
</comment>
<comment type="subunit">
    <text evidence="1">Part of the ribosomal stalk of the 50S ribosomal subunit. The N-terminus interacts with L11 and the large rRNA to form the base of the stalk. The C-terminus forms an elongated spine to which L12 dimers bind in a sequential fashion forming a multimeric L10(L12)X complex (By similarity).</text>
</comment>
<comment type="similarity">
    <text evidence="2">Belongs to the universal ribosomal protein uL10 family.</text>
</comment>
<organism>
    <name type="scientific">Buchnera aphidicola subsp. Baizongia pistaciae (strain Bp)</name>
    <dbReference type="NCBI Taxonomy" id="224915"/>
    <lineage>
        <taxon>Bacteria</taxon>
        <taxon>Pseudomonadati</taxon>
        <taxon>Pseudomonadota</taxon>
        <taxon>Gammaproteobacteria</taxon>
        <taxon>Enterobacterales</taxon>
        <taxon>Erwiniaceae</taxon>
        <taxon>Buchnera</taxon>
    </lineage>
</organism>
<evidence type="ECO:0000250" key="1"/>
<evidence type="ECO:0000305" key="2"/>
<protein>
    <recommendedName>
        <fullName evidence="2">Large ribosomal subunit protein uL10</fullName>
    </recommendedName>
    <alternativeName>
        <fullName>50S ribosomal protein L10</fullName>
    </alternativeName>
</protein>